<accession>Q99JR8</accession>
<accession>B1ARI7</accession>
<accession>B1ARJ6</accession>
<keyword id="KW-0025">Alternative splicing</keyword>
<keyword id="KW-0156">Chromatin regulator</keyword>
<keyword id="KW-1017">Isopeptide bond</keyword>
<keyword id="KW-0488">Methylation</keyword>
<keyword id="KW-0539">Nucleus</keyword>
<keyword id="KW-0597">Phosphoprotein</keyword>
<keyword id="KW-1185">Reference proteome</keyword>
<keyword id="KW-0804">Transcription</keyword>
<keyword id="KW-0805">Transcription regulation</keyword>
<keyword id="KW-0832">Ubl conjugation</keyword>
<sequence>MSGRGAGGFPLPPLSPGGGAVAAALGAPPPPAGPGMLPSPALRGPGPSGGMGVPGAAAFRPMGPAGPAAQYQRPGMSPGSRMPMAGLQVGPPAGSPFGTAAPLRPGMPPTMMDPFRKRLLVPQAQPPMPAQRRGLKRRKMADKVLPQRIRELVPESQAYMDLLAFERKLDQTIARKRMEIQEAIKKPLTQKRKLRIYISNTFSPSKADGDNAGTAGTPGGTPAADKVASWELRVEGKLLDDPSKQKRKFSSFFKSLVIELDKELYGPDNHLVEWHRMPTTQETDGFQVKRPGDLNVKCTLLLMLDHQPPQYKLDPRLARLLGVHTQTRAAIMQALWLYIKHNQLQDGHEREYINCNRYFRQIFSCGRLRFSEIPMKLAGLLQHPDPIVINHVISVDPNDQKKTACYDIDVEVDDPLKAQMSNFLASTTNQQEIASLDVKIHETIESINQLKTQRDFMLSFSTEPQDFIQEWLRSQRRDLKIITDVIGNPEEERRAAFYHQPWAQEAVGRHIFAKVQQRRQELEQVLGIRLT</sequence>
<reference key="1">
    <citation type="journal article" date="2009" name="PLoS Biol.">
        <title>Lineage-specific biology revealed by a finished genome assembly of the mouse.</title>
        <authorList>
            <person name="Church D.M."/>
            <person name="Goodstadt L."/>
            <person name="Hillier L.W."/>
            <person name="Zody M.C."/>
            <person name="Goldstein S."/>
            <person name="She X."/>
            <person name="Bult C.J."/>
            <person name="Agarwala R."/>
            <person name="Cherry J.L."/>
            <person name="DiCuccio M."/>
            <person name="Hlavina W."/>
            <person name="Kapustin Y."/>
            <person name="Meric P."/>
            <person name="Maglott D."/>
            <person name="Birtle Z."/>
            <person name="Marques A.C."/>
            <person name="Graves T."/>
            <person name="Zhou S."/>
            <person name="Teague B."/>
            <person name="Potamousis K."/>
            <person name="Churas C."/>
            <person name="Place M."/>
            <person name="Herschleb J."/>
            <person name="Runnheim R."/>
            <person name="Forrest D."/>
            <person name="Amos-Landgraf J."/>
            <person name="Schwartz D.C."/>
            <person name="Cheng Z."/>
            <person name="Lindblad-Toh K."/>
            <person name="Eichler E.E."/>
            <person name="Ponting C.P."/>
        </authorList>
    </citation>
    <scope>NUCLEOTIDE SEQUENCE [LARGE SCALE GENOMIC DNA]</scope>
    <source>
        <strain>C57BL/6J</strain>
    </source>
</reference>
<reference key="2">
    <citation type="journal article" date="2004" name="Genome Res.">
        <title>The status, quality, and expansion of the NIH full-length cDNA project: the Mammalian Gene Collection (MGC).</title>
        <authorList>
            <consortium name="The MGC Project Team"/>
        </authorList>
    </citation>
    <scope>NUCLEOTIDE SEQUENCE [LARGE SCALE MRNA] (ISOFORM 2)</scope>
    <source>
        <strain>FVB/N</strain>
        <tissue>Mammary tumor</tissue>
    </source>
</reference>
<reference key="3">
    <citation type="journal article" date="2010" name="Cell">
        <title>A tissue-specific atlas of mouse protein phosphorylation and expression.</title>
        <authorList>
            <person name="Huttlin E.L."/>
            <person name="Jedrychowski M.P."/>
            <person name="Elias J.E."/>
            <person name="Goswami T."/>
            <person name="Rad R."/>
            <person name="Beausoleil S.A."/>
            <person name="Villen J."/>
            <person name="Haas W."/>
            <person name="Sowa M.E."/>
            <person name="Gygi S.P."/>
        </authorList>
    </citation>
    <scope>PHOSPHORYLATION [LARGE SCALE ANALYSIS] AT THR-217</scope>
    <scope>IDENTIFICATION BY MASS SPECTROMETRY [LARGE SCALE ANALYSIS]</scope>
    <source>
        <tissue>Kidney</tissue>
        <tissue>Liver</tissue>
        <tissue>Spleen</tissue>
        <tissue>Testis</tissue>
    </source>
</reference>
<gene>
    <name type="primary">Smarcd2</name>
    <name type="synonym">Baf60b</name>
</gene>
<protein>
    <recommendedName>
        <fullName>SWI/SNF-related matrix-associated actin-dependent regulator of chromatin subfamily D member 2</fullName>
    </recommendedName>
    <alternativeName>
        <fullName>60 kDa BRG-1/Brm-associated factor subunit B</fullName>
    </alternativeName>
    <alternativeName>
        <fullName>BRG1-associated factor 60B</fullName>
        <shortName>BAF60B</shortName>
    </alternativeName>
</protein>
<comment type="function">
    <text evidence="1">Involved in transcriptional activation and repression of select genes by chromatin remodeling (alteration of DNA-nucleosome topology). Component of SWI/SNF chromatin remodeling complexes that carry out key enzymatic activities, changing chromatin structure by altering DNA-histone contacts within a nucleosome in an ATP-dependent manner. Critical regulator of myeloid differentiation, controlling granulocytopoiesis and the expression of genes involved in neutrophil granule formation.</text>
</comment>
<comment type="subunit">
    <text evidence="1">Component of the multiprotein chromatin-remodeling complexes SWI/SNF: SWI/SNF-A (BAF), SWI/SNF-B (PBAF) and related complexes. The canonical complex contains a catalytic subunit (either SMARCA4/BRG1/BAF190A or SMARCA2/BRM/BAF190B), and at least SMARCE1, ACTL6A/BAF53, SMARCC1/BAF155, SMARCC2/BAF170, and SMARCB1/SNF5/BAF47. Other subunits specific to each of the complexes may also be present permitting several possible combinations developmentally and tissue specific. Component of the BAF complex, which includes at least actin (ACTB), ARID1A/BAF250A, ARID1B/BAF250B, SMARCA2/BRM, SMARCA4/BRG1, ACTL6A/BAF53, ACTL6B/BAF53B, SMARCE1/BAF57, SMARCC1/BAF155, SMARCC2/BAF170, SMARCB1/SNF5/INI1, and one or more SMARCD1/BAF60A, SMARCD2/BAF60B, or SMARCD3/BAF60C. In muscle cells, the BAF complex also contains DPF3. Component of the SWI/SNF-B (PBAF) chromatin remodeling complex, at least composed of SMARCA4/BRG1, SMARCB1/BAF47/SNF5, ACTL6A/BAF53A or ACTL6B/BAF53B, SMARCE1/BAF57, SMARCD1/BAF60A, SMARCD2/BAF60B, perhaps SMARCD3/BAF60C, SMARCC1/BAF155, SMARCC2/BAF170, PBRM1/BAF180, ARID2/BAF200 and actin (ACTB). Interacts with UNKL. Interacts with CEBPE.</text>
</comment>
<comment type="subcellular location">
    <subcellularLocation>
        <location evidence="1">Nucleus</location>
    </subcellularLocation>
</comment>
<comment type="alternative products">
    <event type="alternative splicing"/>
    <isoform>
        <id>Q99JR8-1</id>
        <name>1</name>
        <sequence type="displayed"/>
    </isoform>
    <isoform>
        <id>Q99JR8-2</id>
        <name>2</name>
        <sequence type="described" ref="VSP_040533"/>
    </isoform>
</comment>
<comment type="PTM">
    <text evidence="1">Ubiquitinated through a signaling process involving RAC1 and the RING finger protein UNKL.</text>
</comment>
<comment type="similarity">
    <text evidence="5">Belongs to the SMARCD family.</text>
</comment>
<comment type="sequence caution" evidence="5">
    <conflict type="erroneous initiation">
        <sequence resource="EMBL-CDS" id="AAH05732"/>
    </conflict>
    <text>Truncated N-terminus.</text>
</comment>
<name>SMRD2_MOUSE</name>
<dbReference type="EMBL" id="AL604045">
    <property type="status" value="NOT_ANNOTATED_CDS"/>
    <property type="molecule type" value="Genomic_DNA"/>
</dbReference>
<dbReference type="EMBL" id="BC005732">
    <property type="protein sequence ID" value="AAH05732.1"/>
    <property type="status" value="ALT_INIT"/>
    <property type="molecule type" value="mRNA"/>
</dbReference>
<dbReference type="CCDS" id="CCDS48957.1">
    <molecule id="Q99JR8-2"/>
</dbReference>
<dbReference type="CCDS" id="CCDS48958.1">
    <molecule id="Q99JR8-1"/>
</dbReference>
<dbReference type="RefSeq" id="NP_001123659.1">
    <molecule id="Q99JR8-1"/>
    <property type="nucleotide sequence ID" value="NM_001130187.1"/>
</dbReference>
<dbReference type="RefSeq" id="NP_114084.2">
    <molecule id="Q99JR8-2"/>
    <property type="nucleotide sequence ID" value="NM_031878.2"/>
</dbReference>
<dbReference type="SMR" id="Q99JR8"/>
<dbReference type="BioGRID" id="219976">
    <property type="interactions" value="6"/>
</dbReference>
<dbReference type="ComplexPortal" id="CPX-1232">
    <property type="entry name" value="SWI/SNF ATP-dependent chromatin remodeling complex, ACTL6A-ARID1A-SMARCA2 variant"/>
</dbReference>
<dbReference type="ComplexPortal" id="CPX-1233">
    <property type="entry name" value="SWI/SNF ATP-dependent chromatin remodeling complex, ACTL6A-ARID1A-SMARCA4 variant"/>
</dbReference>
<dbReference type="ComplexPortal" id="CPX-1234">
    <property type="entry name" value="SWI/SNF ATP-dependent chromatin remodeling complex, ACTL6A-ARID1B-SMARCA2 variant"/>
</dbReference>
<dbReference type="ComplexPortal" id="CPX-1235">
    <property type="entry name" value="SWI/SNF ATP-dependent chromatin remodeling complex, ACTL6A-ARID1B-SMARCA4 variant"/>
</dbReference>
<dbReference type="ComplexPortal" id="CPX-1236">
    <property type="entry name" value="SWI/SNF ATP-dependent chromatin remodeling complex, ACTL6B-ARID1A-SMARCA2 variant"/>
</dbReference>
<dbReference type="ComplexPortal" id="CPX-1237">
    <property type="entry name" value="SWI/SNF ATP-dependent chromatin remodeling complex, ACTL6B-ARID1A-SMARCA4 variant"/>
</dbReference>
<dbReference type="ComplexPortal" id="CPX-1238">
    <property type="entry name" value="SWI/SNF ATP-dependent chromatin remodeling complex, ACTL6B-ARID1B-SMARCA2 variant"/>
</dbReference>
<dbReference type="ComplexPortal" id="CPX-1239">
    <property type="entry name" value="SWI/SNF ATP-dependent chromatin remodeling complex, ACTL6B-ARID1B-SMARCA4 variant"/>
</dbReference>
<dbReference type="ComplexPortal" id="CPX-1240">
    <property type="entry name" value="Muscle cell-specific SWI/SNF ATP-dependent chromatin remodeling complex, ACTL6A-ARID1A-SMARCA2 variant"/>
</dbReference>
<dbReference type="ComplexPortal" id="CPX-1241">
    <property type="entry name" value="Muscle cell-specific SWI/SNF ATP-dependent chromatin remodeling complex, ACTL6A-ARID1A-SMARCA4 variant"/>
</dbReference>
<dbReference type="ComplexPortal" id="CPX-1242">
    <property type="entry name" value="Muscle cell-specific SWI/SNF ATP-dependent chromatin remodeling complex, ACTL6A-ARID1B-SMARCA2 variant"/>
</dbReference>
<dbReference type="ComplexPortal" id="CPX-1243">
    <property type="entry name" value="Muscle cell-specific SWI/SNF ATP-dependent chromatin remodeling complex, ACTL6A-ARID1B-SMARCA4 variant"/>
</dbReference>
<dbReference type="ComplexPortal" id="CPX-1244">
    <property type="entry name" value="Muscle cell-specific SWI/SNF ATP-dependent chromatin remodeling complex, ACTL6B-ARID1A-SMARCA2 variant"/>
</dbReference>
<dbReference type="ComplexPortal" id="CPX-1245">
    <property type="entry name" value="Muscle cell-specific SWI/SNF ATP-dependent chromatin remodeling complex, ACTL6B-ARID1A-SMARCA4 variant"/>
</dbReference>
<dbReference type="ComplexPortal" id="CPX-1246">
    <property type="entry name" value="Muscle cell-specific SWI/SNF ATP-dependent chromatin remodeling complex, ACTL6B-ARID1B-SMARCA2 variant"/>
</dbReference>
<dbReference type="ComplexPortal" id="CPX-1247">
    <property type="entry name" value="Muscle cell-specific SWI/SNF ATP-dependent chromatin remodeling complex, ACTL6B-ARID1B-SMARCA4 variant"/>
</dbReference>
<dbReference type="ComplexPortal" id="CPX-1248">
    <property type="entry name" value="Polybromo-associated SWI/SNF ATP-dependent chromatin remodeling complex, ACTL6A variant"/>
</dbReference>
<dbReference type="ComplexPortal" id="CPX-1250">
    <property type="entry name" value="Polybromo-associated SWI/SNF ATP-dependent chromatin remodeling complex, ACTL6B variant"/>
</dbReference>
<dbReference type="ComplexPortal" id="CPX-1261">
    <property type="entry name" value="Brain-specific SWI/SNF ATP-dependent chromatin remodeling complex, ARID1A-SMARCA2 variant"/>
</dbReference>
<dbReference type="ComplexPortal" id="CPX-1262">
    <property type="entry name" value="Brain-specific SWI/SNF ATP-dependent chromatin remodeling complex, ARID1A-SMARCA4 variant"/>
</dbReference>
<dbReference type="ComplexPortal" id="CPX-1263">
    <property type="entry name" value="Brain-specific SWI/SNF ATP-dependent chromatin remodeling complex, ARID1B-SMARCA2 variant"/>
</dbReference>
<dbReference type="ComplexPortal" id="CPX-1264">
    <property type="entry name" value="Brain-specific SWI/SNF ATP-dependent chromatin remodeling complex, ARID1B-SMARCA4 variant"/>
</dbReference>
<dbReference type="CORUM" id="Q99JR8"/>
<dbReference type="DIP" id="DIP-58950N"/>
<dbReference type="FunCoup" id="Q99JR8">
    <property type="interactions" value="1810"/>
</dbReference>
<dbReference type="IntAct" id="Q99JR8">
    <property type="interactions" value="5"/>
</dbReference>
<dbReference type="MINT" id="Q99JR8"/>
<dbReference type="STRING" id="10090.ENSMUSP00000021052"/>
<dbReference type="GlyGen" id="Q99JR8">
    <property type="glycosylation" value="3 sites, 1 O-linked glycan (1 site)"/>
</dbReference>
<dbReference type="iPTMnet" id="Q99JR8"/>
<dbReference type="PhosphoSitePlus" id="Q99JR8"/>
<dbReference type="SwissPalm" id="Q99JR8"/>
<dbReference type="jPOST" id="Q99JR8"/>
<dbReference type="PaxDb" id="10090-ENSMUSP00000021052"/>
<dbReference type="PeptideAtlas" id="Q99JR8"/>
<dbReference type="ProteomicsDB" id="258705">
    <molecule id="Q99JR8-1"/>
</dbReference>
<dbReference type="ProteomicsDB" id="258706">
    <molecule id="Q99JR8-2"/>
</dbReference>
<dbReference type="Pumba" id="Q99JR8"/>
<dbReference type="Antibodypedia" id="9431">
    <property type="antibodies" value="144 antibodies from 29 providers"/>
</dbReference>
<dbReference type="DNASU" id="83796"/>
<dbReference type="Ensembl" id="ENSMUST00000021052.16">
    <molecule id="Q99JR8-1"/>
    <property type="protein sequence ID" value="ENSMUSP00000021052.10"/>
    <property type="gene ID" value="ENSMUSG00000078619.11"/>
</dbReference>
<dbReference type="Ensembl" id="ENSMUST00000106843.8">
    <molecule id="Q99JR8-2"/>
    <property type="protein sequence ID" value="ENSMUSP00000102456.2"/>
    <property type="gene ID" value="ENSMUSG00000078619.11"/>
</dbReference>
<dbReference type="GeneID" id="83796"/>
<dbReference type="KEGG" id="mmu:83796"/>
<dbReference type="UCSC" id="uc007lyo.2">
    <molecule id="Q99JR8-2"/>
    <property type="organism name" value="mouse"/>
</dbReference>
<dbReference type="UCSC" id="uc007lyp.2">
    <molecule id="Q99JR8-1"/>
    <property type="organism name" value="mouse"/>
</dbReference>
<dbReference type="AGR" id="MGI:1933621"/>
<dbReference type="CTD" id="6603"/>
<dbReference type="MGI" id="MGI:1933621">
    <property type="gene designation" value="Smarcd2"/>
</dbReference>
<dbReference type="VEuPathDB" id="HostDB:ENSMUSG00000078619"/>
<dbReference type="eggNOG" id="KOG2570">
    <property type="taxonomic scope" value="Eukaryota"/>
</dbReference>
<dbReference type="GeneTree" id="ENSGT00940000158654"/>
<dbReference type="HOGENOM" id="CLU_023529_0_2_1"/>
<dbReference type="InParanoid" id="Q99JR8"/>
<dbReference type="OMA" id="MPTQRRG"/>
<dbReference type="OrthoDB" id="10263741at2759"/>
<dbReference type="PhylomeDB" id="Q99JR8"/>
<dbReference type="TreeFam" id="TF106486"/>
<dbReference type="Reactome" id="R-MMU-3214858">
    <property type="pathway name" value="RMTs methylate histone arginines"/>
</dbReference>
<dbReference type="Reactome" id="R-MMU-8939243">
    <property type="pathway name" value="RUNX1 interacts with co-factors whose precise effect on RUNX1 targets is not known"/>
</dbReference>
<dbReference type="BioGRID-ORCS" id="83796">
    <property type="hits" value="5 hits in 87 CRISPR screens"/>
</dbReference>
<dbReference type="ChiTaRS" id="Smarcd2">
    <property type="organism name" value="mouse"/>
</dbReference>
<dbReference type="PRO" id="PR:Q99JR8"/>
<dbReference type="Proteomes" id="UP000000589">
    <property type="component" value="Chromosome 11"/>
</dbReference>
<dbReference type="RNAct" id="Q99JR8">
    <property type="molecule type" value="protein"/>
</dbReference>
<dbReference type="Bgee" id="ENSMUSG00000078619">
    <property type="expression patterns" value="Expressed in ileal epithelium and 266 other cell types or tissues"/>
</dbReference>
<dbReference type="ExpressionAtlas" id="Q99JR8">
    <property type="expression patterns" value="baseline and differential"/>
</dbReference>
<dbReference type="GO" id="GO:0140092">
    <property type="term" value="C:bBAF complex"/>
    <property type="evidence" value="ECO:0000303"/>
    <property type="project" value="ComplexPortal"/>
</dbReference>
<dbReference type="GO" id="GO:0035060">
    <property type="term" value="C:brahma complex"/>
    <property type="evidence" value="ECO:0000303"/>
    <property type="project" value="ComplexPortal"/>
</dbReference>
<dbReference type="GO" id="GO:0000785">
    <property type="term" value="C:chromatin"/>
    <property type="evidence" value="ECO:0000303"/>
    <property type="project" value="ComplexPortal"/>
</dbReference>
<dbReference type="GO" id="GO:0000776">
    <property type="term" value="C:kinetochore"/>
    <property type="evidence" value="ECO:0000303"/>
    <property type="project" value="ComplexPortal"/>
</dbReference>
<dbReference type="GO" id="GO:0016363">
    <property type="term" value="C:nuclear matrix"/>
    <property type="evidence" value="ECO:0000303"/>
    <property type="project" value="ComplexPortal"/>
</dbReference>
<dbReference type="GO" id="GO:0005654">
    <property type="term" value="C:nucleoplasm"/>
    <property type="evidence" value="ECO:0000304"/>
    <property type="project" value="Reactome"/>
</dbReference>
<dbReference type="GO" id="GO:0016586">
    <property type="term" value="C:RSC-type complex"/>
    <property type="evidence" value="ECO:0000303"/>
    <property type="project" value="ComplexPortal"/>
</dbReference>
<dbReference type="GO" id="GO:0016514">
    <property type="term" value="C:SWI/SNF complex"/>
    <property type="evidence" value="ECO:0000303"/>
    <property type="project" value="ComplexPortal"/>
</dbReference>
<dbReference type="GO" id="GO:0006338">
    <property type="term" value="P:chromatin remodeling"/>
    <property type="evidence" value="ECO:0000303"/>
    <property type="project" value="ComplexPortal"/>
</dbReference>
<dbReference type="GO" id="GO:0006337">
    <property type="term" value="P:nucleosome disassembly"/>
    <property type="evidence" value="ECO:0007669"/>
    <property type="project" value="Ensembl"/>
</dbReference>
<dbReference type="GO" id="GO:0045597">
    <property type="term" value="P:positive regulation of cell differentiation"/>
    <property type="evidence" value="ECO:0000303"/>
    <property type="project" value="ComplexPortal"/>
</dbReference>
<dbReference type="GO" id="GO:2000781">
    <property type="term" value="P:positive regulation of double-strand break repair"/>
    <property type="evidence" value="ECO:0000303"/>
    <property type="project" value="ComplexPortal"/>
</dbReference>
<dbReference type="GO" id="GO:0045663">
    <property type="term" value="P:positive regulation of myoblast differentiation"/>
    <property type="evidence" value="ECO:0000303"/>
    <property type="project" value="ComplexPortal"/>
</dbReference>
<dbReference type="GO" id="GO:0045582">
    <property type="term" value="P:positive regulation of T cell differentiation"/>
    <property type="evidence" value="ECO:0000303"/>
    <property type="project" value="ComplexPortal"/>
</dbReference>
<dbReference type="GO" id="GO:0070316">
    <property type="term" value="P:regulation of G0 to G1 transition"/>
    <property type="evidence" value="ECO:0000303"/>
    <property type="project" value="ComplexPortal"/>
</dbReference>
<dbReference type="GO" id="GO:2000045">
    <property type="term" value="P:regulation of G1/S transition of mitotic cell cycle"/>
    <property type="evidence" value="ECO:0000303"/>
    <property type="project" value="ComplexPortal"/>
</dbReference>
<dbReference type="GO" id="GO:0030071">
    <property type="term" value="P:regulation of mitotic metaphase/anaphase transition"/>
    <property type="evidence" value="ECO:0000303"/>
    <property type="project" value="ComplexPortal"/>
</dbReference>
<dbReference type="GO" id="GO:2000819">
    <property type="term" value="P:regulation of nucleotide-excision repair"/>
    <property type="evidence" value="ECO:0000303"/>
    <property type="project" value="ComplexPortal"/>
</dbReference>
<dbReference type="GO" id="GO:0006357">
    <property type="term" value="P:regulation of transcription by RNA polymerase II"/>
    <property type="evidence" value="ECO:0000303"/>
    <property type="project" value="ComplexPortal"/>
</dbReference>
<dbReference type="CDD" id="cd17675">
    <property type="entry name" value="SWIB_BAF60B"/>
    <property type="match status" value="1"/>
</dbReference>
<dbReference type="FunFam" id="1.10.245.10:FF:000001">
    <property type="entry name" value="SWI/SNF-related matrix-associated regulator of chromatin subfamily D member 3 isoform 1"/>
    <property type="match status" value="1"/>
</dbReference>
<dbReference type="Gene3D" id="1.10.245.10">
    <property type="entry name" value="SWIB/MDM2 domain"/>
    <property type="match status" value="1"/>
</dbReference>
<dbReference type="InterPro" id="IPR030090">
    <property type="entry name" value="SMARCD2_SWIB_dom"/>
</dbReference>
<dbReference type="InterPro" id="IPR019835">
    <property type="entry name" value="SWIB_domain"/>
</dbReference>
<dbReference type="InterPro" id="IPR036885">
    <property type="entry name" value="SWIB_MDM2_dom_sf"/>
</dbReference>
<dbReference type="InterPro" id="IPR003121">
    <property type="entry name" value="SWIB_MDM2_domain"/>
</dbReference>
<dbReference type="PANTHER" id="PTHR13844">
    <property type="entry name" value="SWI/SNF-RELATED MATRIX-ASSOCIATED ACTIN-DEPENDENT REGULATOR OF CHROMATIN SUBFAMILY D"/>
    <property type="match status" value="1"/>
</dbReference>
<dbReference type="Pfam" id="PF02201">
    <property type="entry name" value="SWIB"/>
    <property type="match status" value="1"/>
</dbReference>
<dbReference type="SMART" id="SM00151">
    <property type="entry name" value="SWIB"/>
    <property type="match status" value="1"/>
</dbReference>
<dbReference type="SUPFAM" id="SSF47592">
    <property type="entry name" value="SWIB/MDM2 domain"/>
    <property type="match status" value="1"/>
</dbReference>
<dbReference type="PROSITE" id="PS51925">
    <property type="entry name" value="SWIB_MDM2"/>
    <property type="match status" value="1"/>
</dbReference>
<feature type="chain" id="PRO_0000071986" description="SWI/SNF-related matrix-associated actin-dependent regulator of chromatin subfamily D member 2">
    <location>
        <begin position="1"/>
        <end position="531"/>
    </location>
</feature>
<feature type="domain" description="SWIB/MDM2" evidence="2">
    <location>
        <begin position="306"/>
        <end position="383"/>
    </location>
</feature>
<feature type="region of interest" description="Disordered" evidence="3">
    <location>
        <begin position="20"/>
        <end position="85"/>
    </location>
</feature>
<feature type="region of interest" description="Disordered" evidence="3">
    <location>
        <begin position="205"/>
        <end position="226"/>
    </location>
</feature>
<feature type="compositionally biased region" description="Low complexity" evidence="3">
    <location>
        <begin position="34"/>
        <end position="45"/>
    </location>
</feature>
<feature type="compositionally biased region" description="Low complexity" evidence="3">
    <location>
        <begin position="210"/>
        <end position="225"/>
    </location>
</feature>
<feature type="modified residue" description="Asymmetric dimethylarginine" evidence="1">
    <location>
        <position position="81"/>
    </location>
</feature>
<feature type="modified residue" description="Asymmetric dimethylarginine" evidence="1">
    <location>
        <position position="104"/>
    </location>
</feature>
<feature type="modified residue" description="Phosphoserine" evidence="1">
    <location>
        <position position="203"/>
    </location>
</feature>
<feature type="modified residue" description="Phosphothreonine" evidence="6">
    <location>
        <position position="217"/>
    </location>
</feature>
<feature type="cross-link" description="Glycyl lysine isopeptide (Lys-Gly) (interchain with G-Cter in SUMO2)" evidence="1">
    <location>
        <position position="226"/>
    </location>
</feature>
<feature type="splice variant" id="VSP_040533" description="In isoform 2." evidence="4">
    <original>MSGRGAGGFPLPPLSPGGGAVAAALGAPPPPAGPGMLPSPALRGPGPSGGMGVPGAAAFRPMGPAGPAAQY</original>
    <variation>MEGMGYGPRRAPPLTCVPPLFHFP</variation>
    <location>
        <begin position="1"/>
        <end position="71"/>
    </location>
</feature>
<evidence type="ECO:0000250" key="1">
    <source>
        <dbReference type="UniProtKB" id="Q92925"/>
    </source>
</evidence>
<evidence type="ECO:0000255" key="2">
    <source>
        <dbReference type="PROSITE-ProRule" id="PRU01273"/>
    </source>
</evidence>
<evidence type="ECO:0000256" key="3">
    <source>
        <dbReference type="SAM" id="MobiDB-lite"/>
    </source>
</evidence>
<evidence type="ECO:0000303" key="4">
    <source>
    </source>
</evidence>
<evidence type="ECO:0000305" key="5"/>
<evidence type="ECO:0007744" key="6">
    <source>
    </source>
</evidence>
<organism>
    <name type="scientific">Mus musculus</name>
    <name type="common">Mouse</name>
    <dbReference type="NCBI Taxonomy" id="10090"/>
    <lineage>
        <taxon>Eukaryota</taxon>
        <taxon>Metazoa</taxon>
        <taxon>Chordata</taxon>
        <taxon>Craniata</taxon>
        <taxon>Vertebrata</taxon>
        <taxon>Euteleostomi</taxon>
        <taxon>Mammalia</taxon>
        <taxon>Eutheria</taxon>
        <taxon>Euarchontoglires</taxon>
        <taxon>Glires</taxon>
        <taxon>Rodentia</taxon>
        <taxon>Myomorpha</taxon>
        <taxon>Muroidea</taxon>
        <taxon>Muridae</taxon>
        <taxon>Murinae</taxon>
        <taxon>Mus</taxon>
        <taxon>Mus</taxon>
    </lineage>
</organism>
<proteinExistence type="evidence at protein level"/>